<keyword id="KW-0238">DNA-binding</keyword>
<keyword id="KW-1185">Reference proteome</keyword>
<keyword id="KW-0677">Repeat</keyword>
<keyword id="KW-0804">Transcription</keyword>
<keyword id="KW-0805">Transcription regulation</keyword>
<comment type="function">
    <text evidence="1">General factor that plays a role in the activation of archaeal genes transcribed by RNA polymerase. Binds specifically to the TATA box promoter element which lies close to the position of transcription initiation.</text>
</comment>
<comment type="similarity">
    <text evidence="1">Belongs to the TBP family.</text>
</comment>
<dbReference type="EMBL" id="AY596297">
    <property type="protein sequence ID" value="AAV45682.1"/>
    <property type="molecule type" value="Genomic_DNA"/>
</dbReference>
<dbReference type="RefSeq" id="WP_004516850.1">
    <property type="nucleotide sequence ID" value="NZ_CP039138.1"/>
</dbReference>
<dbReference type="SMR" id="Q5V470"/>
<dbReference type="STRING" id="272569.rrnAC0681"/>
<dbReference type="PaxDb" id="272569-rrnAC0681"/>
<dbReference type="EnsemblBacteria" id="AAV45682">
    <property type="protein sequence ID" value="AAV45682"/>
    <property type="gene ID" value="rrnAC0681"/>
</dbReference>
<dbReference type="KEGG" id="hma:rrnAC0681"/>
<dbReference type="PATRIC" id="fig|272569.17.peg.1431"/>
<dbReference type="eggNOG" id="arCOG01764">
    <property type="taxonomic scope" value="Archaea"/>
</dbReference>
<dbReference type="HOGENOM" id="CLU_060161_4_3_2"/>
<dbReference type="Proteomes" id="UP000001169">
    <property type="component" value="Chromosome I"/>
</dbReference>
<dbReference type="GO" id="GO:0003677">
    <property type="term" value="F:DNA binding"/>
    <property type="evidence" value="ECO:0007669"/>
    <property type="project" value="UniProtKB-KW"/>
</dbReference>
<dbReference type="GO" id="GO:0003700">
    <property type="term" value="F:DNA-binding transcription factor activity"/>
    <property type="evidence" value="ECO:0007669"/>
    <property type="project" value="UniProtKB-UniRule"/>
</dbReference>
<dbReference type="GO" id="GO:0006352">
    <property type="term" value="P:DNA-templated transcription initiation"/>
    <property type="evidence" value="ECO:0007669"/>
    <property type="project" value="InterPro"/>
</dbReference>
<dbReference type="CDD" id="cd04518">
    <property type="entry name" value="TBP_archaea"/>
    <property type="match status" value="1"/>
</dbReference>
<dbReference type="FunFam" id="3.30.310.10:FF:000007">
    <property type="entry name" value="TATA-box-binding protein"/>
    <property type="match status" value="1"/>
</dbReference>
<dbReference type="FunFam" id="3.30.310.10:FF:000010">
    <property type="entry name" value="TATA-box-binding protein"/>
    <property type="match status" value="1"/>
</dbReference>
<dbReference type="Gene3D" id="3.30.310.10">
    <property type="entry name" value="TATA-Binding Protein"/>
    <property type="match status" value="2"/>
</dbReference>
<dbReference type="HAMAP" id="MF_00408">
    <property type="entry name" value="TATA_bind_prot_arch"/>
    <property type="match status" value="1"/>
</dbReference>
<dbReference type="InterPro" id="IPR000814">
    <property type="entry name" value="TBP"/>
</dbReference>
<dbReference type="InterPro" id="IPR033711">
    <property type="entry name" value="TBP_archaea"/>
</dbReference>
<dbReference type="InterPro" id="IPR012295">
    <property type="entry name" value="TBP_dom_sf"/>
</dbReference>
<dbReference type="NCBIfam" id="NF001593">
    <property type="entry name" value="PRK00394.1-2"/>
    <property type="match status" value="1"/>
</dbReference>
<dbReference type="NCBIfam" id="NF001595">
    <property type="entry name" value="PRK00394.1-5"/>
    <property type="match status" value="1"/>
</dbReference>
<dbReference type="NCBIfam" id="NF001597">
    <property type="entry name" value="PRK00394.2-2"/>
    <property type="match status" value="1"/>
</dbReference>
<dbReference type="PANTHER" id="PTHR10126">
    <property type="entry name" value="TATA-BOX BINDING PROTEIN"/>
    <property type="match status" value="1"/>
</dbReference>
<dbReference type="Pfam" id="PF00352">
    <property type="entry name" value="TBP"/>
    <property type="match status" value="2"/>
</dbReference>
<dbReference type="PRINTS" id="PR00686">
    <property type="entry name" value="TIFACTORIID"/>
</dbReference>
<dbReference type="SUPFAM" id="SSF55945">
    <property type="entry name" value="TATA-box binding protein-like"/>
    <property type="match status" value="2"/>
</dbReference>
<dbReference type="PROSITE" id="PS00351">
    <property type="entry name" value="TFIID"/>
    <property type="match status" value="1"/>
</dbReference>
<gene>
    <name evidence="1" type="primary">tbp</name>
    <name type="ordered locus">rrnAC0681</name>
</gene>
<reference key="1">
    <citation type="journal article" date="2004" name="Genome Res.">
        <title>Genome sequence of Haloarcula marismortui: a halophilic archaeon from the Dead Sea.</title>
        <authorList>
            <person name="Baliga N.S."/>
            <person name="Bonneau R."/>
            <person name="Facciotti M.T."/>
            <person name="Pan M."/>
            <person name="Glusman G."/>
            <person name="Deutsch E.W."/>
            <person name="Shannon P."/>
            <person name="Chiu Y."/>
            <person name="Weng R.S."/>
            <person name="Gan R.R."/>
            <person name="Hung P."/>
            <person name="Date S.V."/>
            <person name="Marcotte E."/>
            <person name="Hood L."/>
            <person name="Ng W.V."/>
        </authorList>
    </citation>
    <scope>NUCLEOTIDE SEQUENCE [LARGE SCALE GENOMIC DNA]</scope>
    <source>
        <strain>ATCC 43049 / DSM 3752 / JCM 8966 / VKM B-1809</strain>
    </source>
</reference>
<proteinExistence type="inferred from homology"/>
<feature type="chain" id="PRO_1000049878" description="TATA-box-binding protein">
    <location>
        <begin position="1"/>
        <end position="186"/>
    </location>
</feature>
<feature type="repeat" description="1">
    <location>
        <begin position="10"/>
        <end position="86"/>
    </location>
</feature>
<feature type="repeat" description="2">
    <location>
        <begin position="101"/>
        <end position="179"/>
    </location>
</feature>
<protein>
    <recommendedName>
        <fullName evidence="1">TATA-box-binding protein</fullName>
    </recommendedName>
    <alternativeName>
        <fullName evidence="1">Box A-binding protein</fullName>
        <shortName evidence="1">BAP</shortName>
    </alternativeName>
    <alternativeName>
        <fullName evidence="1">TATA sequence-binding protein</fullName>
        <shortName evidence="1">TBP</shortName>
    </alternativeName>
    <alternativeName>
        <fullName evidence="1">TATA-box factor</fullName>
    </alternativeName>
</protein>
<sequence>MVDPKESIDIENVVASTGIGQELDLESVAMDLEGADYDPEQFPGLVYRTQDPKSAALIFRSGKIVCTGAKSTDDVHQSLRIVFDKLRDLNIQVDDDPEIVVQNIVSSADLGSSLNLNAIAIGLGLENIEYEPEQFPGLVYRLDEPDVVALLFGSGKLVVTGGKRKEDAEEAVDTIVERLSDLGLLD</sequence>
<accession>Q5V470</accession>
<name>TBP_HALMA</name>
<organism>
    <name type="scientific">Haloarcula marismortui (strain ATCC 43049 / DSM 3752 / JCM 8966 / VKM B-1809)</name>
    <name type="common">Halobacterium marismortui</name>
    <dbReference type="NCBI Taxonomy" id="272569"/>
    <lineage>
        <taxon>Archaea</taxon>
        <taxon>Methanobacteriati</taxon>
        <taxon>Methanobacteriota</taxon>
        <taxon>Stenosarchaea group</taxon>
        <taxon>Halobacteria</taxon>
        <taxon>Halobacteriales</taxon>
        <taxon>Haloarculaceae</taxon>
        <taxon>Haloarcula</taxon>
    </lineage>
</organism>
<evidence type="ECO:0000255" key="1">
    <source>
        <dbReference type="HAMAP-Rule" id="MF_00408"/>
    </source>
</evidence>